<dbReference type="EC" id="7.4.2.8" evidence="1"/>
<dbReference type="EMBL" id="CP001649">
    <property type="protein sequence ID" value="ACS78280.1"/>
    <property type="molecule type" value="Genomic_DNA"/>
</dbReference>
<dbReference type="RefSeq" id="WP_012765806.1">
    <property type="nucleotide sequence ID" value="NC_012881.1"/>
</dbReference>
<dbReference type="SMR" id="C6BVR6"/>
<dbReference type="STRING" id="526222.Desal_0212"/>
<dbReference type="KEGG" id="dsa:Desal_0212"/>
<dbReference type="eggNOG" id="COG0653">
    <property type="taxonomic scope" value="Bacteria"/>
</dbReference>
<dbReference type="HOGENOM" id="CLU_005314_3_0_7"/>
<dbReference type="OrthoDB" id="9805579at2"/>
<dbReference type="Proteomes" id="UP000002601">
    <property type="component" value="Chromosome"/>
</dbReference>
<dbReference type="GO" id="GO:0031522">
    <property type="term" value="C:cell envelope Sec protein transport complex"/>
    <property type="evidence" value="ECO:0007669"/>
    <property type="project" value="TreeGrafter"/>
</dbReference>
<dbReference type="GO" id="GO:0005829">
    <property type="term" value="C:cytosol"/>
    <property type="evidence" value="ECO:0007669"/>
    <property type="project" value="TreeGrafter"/>
</dbReference>
<dbReference type="GO" id="GO:0005886">
    <property type="term" value="C:plasma membrane"/>
    <property type="evidence" value="ECO:0007669"/>
    <property type="project" value="UniProtKB-SubCell"/>
</dbReference>
<dbReference type="GO" id="GO:0005524">
    <property type="term" value="F:ATP binding"/>
    <property type="evidence" value="ECO:0007669"/>
    <property type="project" value="UniProtKB-UniRule"/>
</dbReference>
<dbReference type="GO" id="GO:0046872">
    <property type="term" value="F:metal ion binding"/>
    <property type="evidence" value="ECO:0007669"/>
    <property type="project" value="UniProtKB-KW"/>
</dbReference>
<dbReference type="GO" id="GO:0008564">
    <property type="term" value="F:protein-exporting ATPase activity"/>
    <property type="evidence" value="ECO:0007669"/>
    <property type="project" value="UniProtKB-EC"/>
</dbReference>
<dbReference type="GO" id="GO:0065002">
    <property type="term" value="P:intracellular protein transmembrane transport"/>
    <property type="evidence" value="ECO:0007669"/>
    <property type="project" value="UniProtKB-UniRule"/>
</dbReference>
<dbReference type="GO" id="GO:0017038">
    <property type="term" value="P:protein import"/>
    <property type="evidence" value="ECO:0007669"/>
    <property type="project" value="InterPro"/>
</dbReference>
<dbReference type="GO" id="GO:0006605">
    <property type="term" value="P:protein targeting"/>
    <property type="evidence" value="ECO:0007669"/>
    <property type="project" value="UniProtKB-UniRule"/>
</dbReference>
<dbReference type="GO" id="GO:0043952">
    <property type="term" value="P:protein transport by the Sec complex"/>
    <property type="evidence" value="ECO:0007669"/>
    <property type="project" value="TreeGrafter"/>
</dbReference>
<dbReference type="CDD" id="cd17928">
    <property type="entry name" value="DEXDc_SecA"/>
    <property type="match status" value="1"/>
</dbReference>
<dbReference type="CDD" id="cd18803">
    <property type="entry name" value="SF2_C_secA"/>
    <property type="match status" value="1"/>
</dbReference>
<dbReference type="FunFam" id="3.40.50.300:FF:000694">
    <property type="entry name" value="Preprotein translocase subunit SecA"/>
    <property type="match status" value="1"/>
</dbReference>
<dbReference type="FunFam" id="3.90.1440.10:FF:000001">
    <property type="entry name" value="Preprotein translocase subunit SecA"/>
    <property type="match status" value="1"/>
</dbReference>
<dbReference type="FunFam" id="3.40.50.300:FF:000334">
    <property type="entry name" value="Protein translocase subunit SecA"/>
    <property type="match status" value="1"/>
</dbReference>
<dbReference type="Gene3D" id="1.10.3060.10">
    <property type="entry name" value="Helical scaffold and wing domains of SecA"/>
    <property type="match status" value="1"/>
</dbReference>
<dbReference type="Gene3D" id="3.40.50.300">
    <property type="entry name" value="P-loop containing nucleotide triphosphate hydrolases"/>
    <property type="match status" value="3"/>
</dbReference>
<dbReference type="Gene3D" id="3.90.1440.10">
    <property type="entry name" value="SecA, preprotein cross-linking domain"/>
    <property type="match status" value="1"/>
</dbReference>
<dbReference type="HAMAP" id="MF_01382">
    <property type="entry name" value="SecA"/>
    <property type="match status" value="1"/>
</dbReference>
<dbReference type="InterPro" id="IPR014001">
    <property type="entry name" value="Helicase_ATP-bd"/>
</dbReference>
<dbReference type="InterPro" id="IPR001650">
    <property type="entry name" value="Helicase_C-like"/>
</dbReference>
<dbReference type="InterPro" id="IPR027417">
    <property type="entry name" value="P-loop_NTPase"/>
</dbReference>
<dbReference type="InterPro" id="IPR004027">
    <property type="entry name" value="SEC_C_motif"/>
</dbReference>
<dbReference type="InterPro" id="IPR000185">
    <property type="entry name" value="SecA"/>
</dbReference>
<dbReference type="InterPro" id="IPR020937">
    <property type="entry name" value="SecA_CS"/>
</dbReference>
<dbReference type="InterPro" id="IPR011115">
    <property type="entry name" value="SecA_DEAD"/>
</dbReference>
<dbReference type="InterPro" id="IPR014018">
    <property type="entry name" value="SecA_motor_DEAD"/>
</dbReference>
<dbReference type="InterPro" id="IPR011130">
    <property type="entry name" value="SecA_preprotein_X-link_dom"/>
</dbReference>
<dbReference type="InterPro" id="IPR044722">
    <property type="entry name" value="SecA_SF2_C"/>
</dbReference>
<dbReference type="InterPro" id="IPR011116">
    <property type="entry name" value="SecA_Wing/Scaffold"/>
</dbReference>
<dbReference type="InterPro" id="IPR036266">
    <property type="entry name" value="SecA_Wing/Scaffold_sf"/>
</dbReference>
<dbReference type="InterPro" id="IPR036670">
    <property type="entry name" value="SecA_X-link_sf"/>
</dbReference>
<dbReference type="NCBIfam" id="NF006630">
    <property type="entry name" value="PRK09200.1"/>
    <property type="match status" value="1"/>
</dbReference>
<dbReference type="NCBIfam" id="NF009538">
    <property type="entry name" value="PRK12904.1"/>
    <property type="match status" value="1"/>
</dbReference>
<dbReference type="NCBIfam" id="TIGR00963">
    <property type="entry name" value="secA"/>
    <property type="match status" value="1"/>
</dbReference>
<dbReference type="PANTHER" id="PTHR30612:SF0">
    <property type="entry name" value="CHLOROPLAST PROTEIN-TRANSPORTING ATPASE"/>
    <property type="match status" value="1"/>
</dbReference>
<dbReference type="PANTHER" id="PTHR30612">
    <property type="entry name" value="SECA INNER MEMBRANE COMPONENT OF SEC PROTEIN SECRETION SYSTEM"/>
    <property type="match status" value="1"/>
</dbReference>
<dbReference type="Pfam" id="PF21090">
    <property type="entry name" value="P-loop_SecA"/>
    <property type="match status" value="1"/>
</dbReference>
<dbReference type="Pfam" id="PF02810">
    <property type="entry name" value="SEC-C"/>
    <property type="match status" value="1"/>
</dbReference>
<dbReference type="Pfam" id="PF07517">
    <property type="entry name" value="SecA_DEAD"/>
    <property type="match status" value="1"/>
</dbReference>
<dbReference type="Pfam" id="PF01043">
    <property type="entry name" value="SecA_PP_bind"/>
    <property type="match status" value="1"/>
</dbReference>
<dbReference type="Pfam" id="PF07516">
    <property type="entry name" value="SecA_SW"/>
    <property type="match status" value="1"/>
</dbReference>
<dbReference type="PRINTS" id="PR00906">
    <property type="entry name" value="SECA"/>
</dbReference>
<dbReference type="SMART" id="SM00957">
    <property type="entry name" value="SecA_DEAD"/>
    <property type="match status" value="1"/>
</dbReference>
<dbReference type="SMART" id="SM00958">
    <property type="entry name" value="SecA_PP_bind"/>
    <property type="match status" value="1"/>
</dbReference>
<dbReference type="SUPFAM" id="SSF81886">
    <property type="entry name" value="Helical scaffold and wing domains of SecA"/>
    <property type="match status" value="1"/>
</dbReference>
<dbReference type="SUPFAM" id="SSF52540">
    <property type="entry name" value="P-loop containing nucleoside triphosphate hydrolases"/>
    <property type="match status" value="2"/>
</dbReference>
<dbReference type="SUPFAM" id="SSF81767">
    <property type="entry name" value="Pre-protein crosslinking domain of SecA"/>
    <property type="match status" value="1"/>
</dbReference>
<dbReference type="PROSITE" id="PS01312">
    <property type="entry name" value="SECA"/>
    <property type="match status" value="1"/>
</dbReference>
<dbReference type="PROSITE" id="PS51196">
    <property type="entry name" value="SECA_MOTOR_DEAD"/>
    <property type="match status" value="1"/>
</dbReference>
<name>SECA_MARSD</name>
<keyword id="KW-0067">ATP-binding</keyword>
<keyword id="KW-0997">Cell inner membrane</keyword>
<keyword id="KW-1003">Cell membrane</keyword>
<keyword id="KW-0963">Cytoplasm</keyword>
<keyword id="KW-0472">Membrane</keyword>
<keyword id="KW-0479">Metal-binding</keyword>
<keyword id="KW-0547">Nucleotide-binding</keyword>
<keyword id="KW-0653">Protein transport</keyword>
<keyword id="KW-1185">Reference proteome</keyword>
<keyword id="KW-1278">Translocase</keyword>
<keyword id="KW-0811">Translocation</keyword>
<keyword id="KW-0813">Transport</keyword>
<keyword id="KW-0862">Zinc</keyword>
<accession>C6BVR6</accession>
<proteinExistence type="inferred from homology"/>
<protein>
    <recommendedName>
        <fullName evidence="1">Protein translocase subunit SecA</fullName>
        <ecNumber evidence="1">7.4.2.8</ecNumber>
    </recommendedName>
</protein>
<sequence length="837" mass="95540">MFNLIVSKLFGSRNERFIKKLKPQIDQIAALEPEMEKLTDEQFPQKIAEYKEQVAAGTSLDDILVEVFALVREAGKRSLEMRHYDVQMVGGMVLHSGRIAEMKTGEGKTLVATLPAVLNALSGKGVHLITVNDYLAKRDAEWMGKLYNFLGLTVGVVVHGLSDEERQEAYGCDITYGTNNEFGFDYLRDNMKFYKEQLVQRELNYCIVDEVDSILIDEARTPLIISGASEDATSMYGRVNSMIPLLKRDEDFEVDEKGRSITMTDDGVMKCEQILGIDNLYDSQHISFQHHIMQGIKAHHLFSRDVDYIVKDGQVVIVDEFTGRLMPGRRFSDGLHQALEAKEGVKVESENQTLASITFQNYFRMYNKLAGMTGTADTESVEFAQIYDLEVIVIPTNTAMIRKDFPDSIYKTQQEKYNAIADDIAAKYKKGQPVLVGTVSIEKSELVSSLLKKRKIPHNVLNAKHHQQEAEIVAEAGHKGHVTIATNMAGRGTDIKLGEGVLEIGGLHIIGTERHESRRIDNQLRGRSGRQGDPGSTRFYLALDDDLMRLFGSDRIAGIMDKLGMEEGEPIENGMVTKAIENSQKKVEGHNFEIRKQLLDYDNVMNQQREVIYTLRRDVMYSEDMNEMTAEFVEELFDDAFYAVEEAKGKPLDAETEEMVRVRLDELFGINRNEEFKEALPTREQAEEWVSEILDTLKESAGDHYHEIQRYFLLEALDRNWKEHLLNMDHLREGIGLRGYGQKDPKHEYKREGFELFREMLGRIKENTVRALCHLRIETEVREDEFQHKESKSDLEYSDSENTETKKKPKRRSEPKVGRNDPCPCGSGKKYKKCCGK</sequence>
<comment type="function">
    <text evidence="1">Part of the Sec protein translocase complex. Interacts with the SecYEG preprotein conducting channel. Has a central role in coupling the hydrolysis of ATP to the transfer of proteins into and across the cell membrane, serving as an ATP-driven molecular motor driving the stepwise translocation of polypeptide chains across the membrane.</text>
</comment>
<comment type="catalytic activity">
    <reaction evidence="1">
        <text>ATP + H2O + cellular proteinSide 1 = ADP + phosphate + cellular proteinSide 2.</text>
        <dbReference type="EC" id="7.4.2.8"/>
    </reaction>
</comment>
<comment type="cofactor">
    <cofactor evidence="1">
        <name>Zn(2+)</name>
        <dbReference type="ChEBI" id="CHEBI:29105"/>
    </cofactor>
    <text evidence="1">May bind 1 zinc ion per subunit.</text>
</comment>
<comment type="subunit">
    <text evidence="1">Monomer and homodimer. Part of the essential Sec protein translocation apparatus which comprises SecA, SecYEG and auxiliary proteins SecDF-YajC and YidC.</text>
</comment>
<comment type="subcellular location">
    <subcellularLocation>
        <location evidence="1">Cell inner membrane</location>
        <topology evidence="1">Peripheral membrane protein</topology>
        <orientation evidence="1">Cytoplasmic side</orientation>
    </subcellularLocation>
    <subcellularLocation>
        <location evidence="1">Cytoplasm</location>
    </subcellularLocation>
    <text evidence="1">Distribution is 50-50.</text>
</comment>
<comment type="similarity">
    <text evidence="1">Belongs to the SecA family.</text>
</comment>
<reference key="1">
    <citation type="submission" date="2009-06" db="EMBL/GenBank/DDBJ databases">
        <title>Complete sequence of Desulfovibrio salexigens DSM 2638.</title>
        <authorList>
            <consortium name="US DOE Joint Genome Institute"/>
            <person name="Lucas S."/>
            <person name="Copeland A."/>
            <person name="Lapidus A."/>
            <person name="Glavina del Rio T."/>
            <person name="Tice H."/>
            <person name="Bruce D."/>
            <person name="Goodwin L."/>
            <person name="Pitluck S."/>
            <person name="Munk A.C."/>
            <person name="Brettin T."/>
            <person name="Detter J.C."/>
            <person name="Han C."/>
            <person name="Tapia R."/>
            <person name="Larimer F."/>
            <person name="Land M."/>
            <person name="Hauser L."/>
            <person name="Kyrpides N."/>
            <person name="Anderson I."/>
            <person name="Wall J.D."/>
            <person name="Arkin A.P."/>
            <person name="Dehal P."/>
            <person name="Chivian D."/>
            <person name="Giles B."/>
            <person name="Hazen T.C."/>
        </authorList>
    </citation>
    <scope>NUCLEOTIDE SEQUENCE [LARGE SCALE GENOMIC DNA]</scope>
    <source>
        <strain>ATCC 14822 / DSM 2638 / NCIMB 8403 / VKM B-1763</strain>
    </source>
</reference>
<evidence type="ECO:0000255" key="1">
    <source>
        <dbReference type="HAMAP-Rule" id="MF_01382"/>
    </source>
</evidence>
<evidence type="ECO:0000256" key="2">
    <source>
        <dbReference type="SAM" id="MobiDB-lite"/>
    </source>
</evidence>
<feature type="chain" id="PRO_1000215106" description="Protein translocase subunit SecA">
    <location>
        <begin position="1"/>
        <end position="837"/>
    </location>
</feature>
<feature type="region of interest" description="Disordered" evidence="2">
    <location>
        <begin position="788"/>
        <end position="837"/>
    </location>
</feature>
<feature type="binding site" evidence="1">
    <location>
        <position position="87"/>
    </location>
    <ligand>
        <name>ATP</name>
        <dbReference type="ChEBI" id="CHEBI:30616"/>
    </ligand>
</feature>
<feature type="binding site" evidence="1">
    <location>
        <begin position="105"/>
        <end position="109"/>
    </location>
    <ligand>
        <name>ATP</name>
        <dbReference type="ChEBI" id="CHEBI:30616"/>
    </ligand>
</feature>
<feature type="binding site" evidence="1">
    <location>
        <position position="494"/>
    </location>
    <ligand>
        <name>ATP</name>
        <dbReference type="ChEBI" id="CHEBI:30616"/>
    </ligand>
</feature>
<feature type="binding site" evidence="1">
    <location>
        <position position="823"/>
    </location>
    <ligand>
        <name>Zn(2+)</name>
        <dbReference type="ChEBI" id="CHEBI:29105"/>
    </ligand>
</feature>
<feature type="binding site" evidence="1">
    <location>
        <position position="825"/>
    </location>
    <ligand>
        <name>Zn(2+)</name>
        <dbReference type="ChEBI" id="CHEBI:29105"/>
    </ligand>
</feature>
<feature type="binding site" evidence="1">
    <location>
        <position position="834"/>
    </location>
    <ligand>
        <name>Zn(2+)</name>
        <dbReference type="ChEBI" id="CHEBI:29105"/>
    </ligand>
</feature>
<feature type="binding site" evidence="1">
    <location>
        <position position="835"/>
    </location>
    <ligand>
        <name>Zn(2+)</name>
        <dbReference type="ChEBI" id="CHEBI:29105"/>
    </ligand>
</feature>
<organism>
    <name type="scientific">Maridesulfovibrio salexigens (strain ATCC 14822 / DSM 2638 / NCIMB 8403 / VKM B-1763)</name>
    <name type="common">Desulfovibrio salexigens</name>
    <dbReference type="NCBI Taxonomy" id="526222"/>
    <lineage>
        <taxon>Bacteria</taxon>
        <taxon>Pseudomonadati</taxon>
        <taxon>Thermodesulfobacteriota</taxon>
        <taxon>Desulfovibrionia</taxon>
        <taxon>Desulfovibrionales</taxon>
        <taxon>Desulfovibrionaceae</taxon>
        <taxon>Maridesulfovibrio</taxon>
    </lineage>
</organism>
<gene>
    <name evidence="1" type="primary">secA</name>
    <name type="ordered locus">Desal_0212</name>
</gene>